<evidence type="ECO:0000255" key="1">
    <source>
        <dbReference type="HAMAP-Rule" id="MF_00662"/>
    </source>
</evidence>
<reference key="1">
    <citation type="journal article" date="2008" name="PLoS ONE">
        <title>Comparative analysis of Acinetobacters: three genomes for three lifestyles.</title>
        <authorList>
            <person name="Vallenet D."/>
            <person name="Nordmann P."/>
            <person name="Barbe V."/>
            <person name="Poirel L."/>
            <person name="Mangenot S."/>
            <person name="Bataille E."/>
            <person name="Dossat C."/>
            <person name="Gas S."/>
            <person name="Kreimeyer A."/>
            <person name="Lenoble P."/>
            <person name="Oztas S."/>
            <person name="Poulain J."/>
            <person name="Segurens B."/>
            <person name="Robert C."/>
            <person name="Abergel C."/>
            <person name="Claverie J.-M."/>
            <person name="Raoult D."/>
            <person name="Medigue C."/>
            <person name="Weissenbach J."/>
            <person name="Cruveiller S."/>
        </authorList>
    </citation>
    <scope>NUCLEOTIDE SEQUENCE [LARGE SCALE GENOMIC DNA]</scope>
    <source>
        <strain>AYE</strain>
    </source>
</reference>
<accession>B0V9W1</accession>
<feature type="chain" id="PRO_1000131326" description="Phosphatidylserine decarboxylase beta chain" evidence="1">
    <location>
        <begin position="1"/>
        <end position="249"/>
    </location>
</feature>
<feature type="chain" id="PRO_1000131327" description="Phosphatidylserine decarboxylase alpha chain" evidence="1">
    <location>
        <begin position="250"/>
        <end position="283"/>
    </location>
</feature>
<feature type="active site" description="Charge relay system; for autoendoproteolytic cleavage activity" evidence="1">
    <location>
        <position position="96"/>
    </location>
</feature>
<feature type="active site" description="Charge relay system; for autoendoproteolytic cleavage activity" evidence="1">
    <location>
        <position position="152"/>
    </location>
</feature>
<feature type="active site" description="Charge relay system; for autoendoproteolytic cleavage activity" evidence="1">
    <location>
        <position position="250"/>
    </location>
</feature>
<feature type="active site" description="Schiff-base intermediate with substrate; via pyruvic acid; for decarboxylase activity" evidence="1">
    <location>
        <position position="250"/>
    </location>
</feature>
<feature type="site" description="Cleavage (non-hydrolytic); by autocatalysis" evidence="1">
    <location>
        <begin position="249"/>
        <end position="250"/>
    </location>
</feature>
<feature type="modified residue" description="Pyruvic acid (Ser); by autocatalysis" evidence="1">
    <location>
        <position position="250"/>
    </location>
</feature>
<name>PSD_ACIBY</name>
<proteinExistence type="inferred from homology"/>
<comment type="function">
    <text evidence="1">Catalyzes the formation of phosphatidylethanolamine (PtdEtn) from phosphatidylserine (PtdSer).</text>
</comment>
<comment type="catalytic activity">
    <reaction evidence="1">
        <text>a 1,2-diacyl-sn-glycero-3-phospho-L-serine + H(+) = a 1,2-diacyl-sn-glycero-3-phosphoethanolamine + CO2</text>
        <dbReference type="Rhea" id="RHEA:20828"/>
        <dbReference type="ChEBI" id="CHEBI:15378"/>
        <dbReference type="ChEBI" id="CHEBI:16526"/>
        <dbReference type="ChEBI" id="CHEBI:57262"/>
        <dbReference type="ChEBI" id="CHEBI:64612"/>
        <dbReference type="EC" id="4.1.1.65"/>
    </reaction>
</comment>
<comment type="cofactor">
    <cofactor evidence="1">
        <name>pyruvate</name>
        <dbReference type="ChEBI" id="CHEBI:15361"/>
    </cofactor>
    <text evidence="1">Binds 1 pyruvoyl group covalently per subunit.</text>
</comment>
<comment type="pathway">
    <text evidence="1">Phospholipid metabolism; phosphatidylethanolamine biosynthesis; phosphatidylethanolamine from CDP-diacylglycerol: step 2/2.</text>
</comment>
<comment type="subunit">
    <text evidence="1">Heterodimer of a large membrane-associated beta subunit and a small pyruvoyl-containing alpha subunit.</text>
</comment>
<comment type="subcellular location">
    <subcellularLocation>
        <location evidence="1">Cell membrane</location>
        <topology evidence="1">Peripheral membrane protein</topology>
    </subcellularLocation>
</comment>
<comment type="PTM">
    <text evidence="1">Is synthesized initially as an inactive proenzyme. Formation of the active enzyme involves a self-maturation process in which the active site pyruvoyl group is generated from an internal serine residue via an autocatalytic post-translational modification. Two non-identical subunits are generated from the proenzyme in this reaction, and the pyruvate is formed at the N-terminus of the alpha chain, which is derived from the carboxyl end of the proenzyme. The autoendoproteolytic cleavage occurs by a canonical serine protease mechanism, in which the side chain hydroxyl group of the serine supplies its oxygen atom to form the C-terminus of the beta chain, while the remainder of the serine residue undergoes an oxidative deamination to produce ammonia and the pyruvoyl prosthetic group on the alpha chain. During this reaction, the Ser that is part of the protease active site of the proenzyme becomes the pyruvoyl prosthetic group, which constitutes an essential element of the active site of the mature decarboxylase.</text>
</comment>
<comment type="similarity">
    <text evidence="1">Belongs to the phosphatidylserine decarboxylase family. PSD-B subfamily. Prokaryotic type I sub-subfamily.</text>
</comment>
<sequence>MSFTSRLKKELFIKAQNLVPQHQLSRVVGKVAASENPILKAAVIHAFKTKYGIDLSIAEQGNALKYKSFNDFFTRALKDGVRLVDENPDSIVSPADGAISQIGKITAGEVFQAKGQSFSVEKLIGDPQLAQPFQEGEFATVYLSPRDYHRVHMPFSGTLTETLYVPGELFSVNQVTAENVPGLFARNERMVCLFDTELGRMAVVLVGAMIVAGIETVATGKVKPSGRIELQHHELKLEKGAELGRFYLGSTAIILFEKDKIEWEKRFKAESVVVMGERMGHTL</sequence>
<keyword id="KW-1003">Cell membrane</keyword>
<keyword id="KW-0210">Decarboxylase</keyword>
<keyword id="KW-0444">Lipid biosynthesis</keyword>
<keyword id="KW-0443">Lipid metabolism</keyword>
<keyword id="KW-0456">Lyase</keyword>
<keyword id="KW-0472">Membrane</keyword>
<keyword id="KW-0594">Phospholipid biosynthesis</keyword>
<keyword id="KW-1208">Phospholipid metabolism</keyword>
<keyword id="KW-0670">Pyruvate</keyword>
<keyword id="KW-0865">Zymogen</keyword>
<organism>
    <name type="scientific">Acinetobacter baumannii (strain AYE)</name>
    <dbReference type="NCBI Taxonomy" id="509173"/>
    <lineage>
        <taxon>Bacteria</taxon>
        <taxon>Pseudomonadati</taxon>
        <taxon>Pseudomonadota</taxon>
        <taxon>Gammaproteobacteria</taxon>
        <taxon>Moraxellales</taxon>
        <taxon>Moraxellaceae</taxon>
        <taxon>Acinetobacter</taxon>
        <taxon>Acinetobacter calcoaceticus/baumannii complex</taxon>
    </lineage>
</organism>
<protein>
    <recommendedName>
        <fullName evidence="1">Phosphatidylserine decarboxylase proenzyme</fullName>
        <ecNumber evidence="1">4.1.1.65</ecNumber>
    </recommendedName>
    <component>
        <recommendedName>
            <fullName evidence="1">Phosphatidylserine decarboxylase alpha chain</fullName>
        </recommendedName>
    </component>
    <component>
        <recommendedName>
            <fullName evidence="1">Phosphatidylserine decarboxylase beta chain</fullName>
        </recommendedName>
    </component>
</protein>
<gene>
    <name evidence="1" type="primary">psd</name>
    <name type="ordered locus">ABAYE0104</name>
</gene>
<dbReference type="EC" id="4.1.1.65" evidence="1"/>
<dbReference type="EMBL" id="CU459141">
    <property type="protein sequence ID" value="CAM85091.1"/>
    <property type="molecule type" value="Genomic_DNA"/>
</dbReference>
<dbReference type="SMR" id="B0V9W1"/>
<dbReference type="EnsemblBacteria" id="CAM85091">
    <property type="protein sequence ID" value="CAM85091"/>
    <property type="gene ID" value="ABAYE0104"/>
</dbReference>
<dbReference type="KEGG" id="aby:ABAYE0104"/>
<dbReference type="HOGENOM" id="CLU_029061_4_1_6"/>
<dbReference type="UniPathway" id="UPA00558">
    <property type="reaction ID" value="UER00616"/>
</dbReference>
<dbReference type="GO" id="GO:0005886">
    <property type="term" value="C:plasma membrane"/>
    <property type="evidence" value="ECO:0007669"/>
    <property type="project" value="UniProtKB-SubCell"/>
</dbReference>
<dbReference type="GO" id="GO:0004609">
    <property type="term" value="F:phosphatidylserine decarboxylase activity"/>
    <property type="evidence" value="ECO:0007669"/>
    <property type="project" value="UniProtKB-UniRule"/>
</dbReference>
<dbReference type="GO" id="GO:0006646">
    <property type="term" value="P:phosphatidylethanolamine biosynthetic process"/>
    <property type="evidence" value="ECO:0007669"/>
    <property type="project" value="UniProtKB-UniRule"/>
</dbReference>
<dbReference type="HAMAP" id="MF_00662">
    <property type="entry name" value="PS_decarb_PSD_B_type1"/>
    <property type="match status" value="1"/>
</dbReference>
<dbReference type="InterPro" id="IPR003817">
    <property type="entry name" value="PS_Dcarbxylase"/>
</dbReference>
<dbReference type="InterPro" id="IPR033177">
    <property type="entry name" value="PSD-B"/>
</dbReference>
<dbReference type="InterPro" id="IPR033178">
    <property type="entry name" value="PSD_type1_pro"/>
</dbReference>
<dbReference type="NCBIfam" id="TIGR00163">
    <property type="entry name" value="PS_decarb"/>
    <property type="match status" value="1"/>
</dbReference>
<dbReference type="PANTHER" id="PTHR10067">
    <property type="entry name" value="PHOSPHATIDYLSERINE DECARBOXYLASE"/>
    <property type="match status" value="1"/>
</dbReference>
<dbReference type="PANTHER" id="PTHR10067:SF6">
    <property type="entry name" value="PHOSPHATIDYLSERINE DECARBOXYLASE PROENZYME, MITOCHONDRIAL"/>
    <property type="match status" value="1"/>
</dbReference>
<dbReference type="Pfam" id="PF02666">
    <property type="entry name" value="PS_Dcarbxylase"/>
    <property type="match status" value="1"/>
</dbReference>